<evidence type="ECO:0000255" key="1">
    <source>
        <dbReference type="HAMAP-Rule" id="MF_01398"/>
    </source>
</evidence>
<accession>B0VBP7</accession>
<protein>
    <recommendedName>
        <fullName evidence="1">ATP synthase subunit b</fullName>
    </recommendedName>
    <alternativeName>
        <fullName evidence="1">ATP synthase F(0) sector subunit b</fullName>
    </alternativeName>
    <alternativeName>
        <fullName evidence="1">ATPase subunit I</fullName>
    </alternativeName>
    <alternativeName>
        <fullName evidence="1">F-type ATPase subunit b</fullName>
        <shortName evidence="1">F-ATPase subunit b</shortName>
    </alternativeName>
</protein>
<proteinExistence type="inferred from homology"/>
<gene>
    <name evidence="1" type="primary">atpF</name>
    <name type="ordered locus">ABAYE3720</name>
</gene>
<dbReference type="EMBL" id="CU459141">
    <property type="protein sequence ID" value="CAM88484.1"/>
    <property type="molecule type" value="Genomic_DNA"/>
</dbReference>
<dbReference type="RefSeq" id="WP_001024691.1">
    <property type="nucleotide sequence ID" value="NZ_JBDGFB010000006.1"/>
</dbReference>
<dbReference type="SMR" id="B0VBP7"/>
<dbReference type="EnsemblBacteria" id="CAM88484">
    <property type="protein sequence ID" value="CAM88484"/>
    <property type="gene ID" value="ABAYE3720"/>
</dbReference>
<dbReference type="KEGG" id="aby:ABAYE3720"/>
<dbReference type="HOGENOM" id="CLU_079215_4_5_6"/>
<dbReference type="GO" id="GO:0005886">
    <property type="term" value="C:plasma membrane"/>
    <property type="evidence" value="ECO:0007669"/>
    <property type="project" value="UniProtKB-SubCell"/>
</dbReference>
<dbReference type="GO" id="GO:0045259">
    <property type="term" value="C:proton-transporting ATP synthase complex"/>
    <property type="evidence" value="ECO:0007669"/>
    <property type="project" value="UniProtKB-KW"/>
</dbReference>
<dbReference type="GO" id="GO:0046933">
    <property type="term" value="F:proton-transporting ATP synthase activity, rotational mechanism"/>
    <property type="evidence" value="ECO:0007669"/>
    <property type="project" value="UniProtKB-UniRule"/>
</dbReference>
<dbReference type="GO" id="GO:0046961">
    <property type="term" value="F:proton-transporting ATPase activity, rotational mechanism"/>
    <property type="evidence" value="ECO:0007669"/>
    <property type="project" value="TreeGrafter"/>
</dbReference>
<dbReference type="CDD" id="cd06503">
    <property type="entry name" value="ATP-synt_Fo_b"/>
    <property type="match status" value="1"/>
</dbReference>
<dbReference type="FunFam" id="1.20.5.620:FF:000001">
    <property type="entry name" value="ATP synthase subunit b"/>
    <property type="match status" value="1"/>
</dbReference>
<dbReference type="Gene3D" id="6.10.250.1580">
    <property type="match status" value="1"/>
</dbReference>
<dbReference type="HAMAP" id="MF_01398">
    <property type="entry name" value="ATP_synth_b_bprime"/>
    <property type="match status" value="1"/>
</dbReference>
<dbReference type="InterPro" id="IPR028987">
    <property type="entry name" value="ATP_synth_B-like_membr_sf"/>
</dbReference>
<dbReference type="InterPro" id="IPR002146">
    <property type="entry name" value="ATP_synth_b/b'su_bac/chlpt"/>
</dbReference>
<dbReference type="InterPro" id="IPR005864">
    <property type="entry name" value="ATP_synth_F0_bsu_bac"/>
</dbReference>
<dbReference type="InterPro" id="IPR050059">
    <property type="entry name" value="ATP_synthase_B_chain"/>
</dbReference>
<dbReference type="NCBIfam" id="TIGR01144">
    <property type="entry name" value="ATP_synt_b"/>
    <property type="match status" value="1"/>
</dbReference>
<dbReference type="NCBIfam" id="NF004411">
    <property type="entry name" value="PRK05759.1-2"/>
    <property type="match status" value="1"/>
</dbReference>
<dbReference type="PANTHER" id="PTHR33445:SF1">
    <property type="entry name" value="ATP SYNTHASE SUBUNIT B"/>
    <property type="match status" value="1"/>
</dbReference>
<dbReference type="PANTHER" id="PTHR33445">
    <property type="entry name" value="ATP SYNTHASE SUBUNIT B', CHLOROPLASTIC"/>
    <property type="match status" value="1"/>
</dbReference>
<dbReference type="Pfam" id="PF00430">
    <property type="entry name" value="ATP-synt_B"/>
    <property type="match status" value="1"/>
</dbReference>
<dbReference type="SUPFAM" id="SSF81573">
    <property type="entry name" value="F1F0 ATP synthase subunit B, membrane domain"/>
    <property type="match status" value="1"/>
</dbReference>
<organism>
    <name type="scientific">Acinetobacter baumannii (strain AYE)</name>
    <dbReference type="NCBI Taxonomy" id="509173"/>
    <lineage>
        <taxon>Bacteria</taxon>
        <taxon>Pseudomonadati</taxon>
        <taxon>Pseudomonadota</taxon>
        <taxon>Gammaproteobacteria</taxon>
        <taxon>Moraxellales</taxon>
        <taxon>Moraxellaceae</taxon>
        <taxon>Acinetobacter</taxon>
        <taxon>Acinetobacter calcoaceticus/baumannii complex</taxon>
    </lineage>
</organism>
<name>ATPF_ACIBY</name>
<keyword id="KW-0066">ATP synthesis</keyword>
<keyword id="KW-0997">Cell inner membrane</keyword>
<keyword id="KW-1003">Cell membrane</keyword>
<keyword id="KW-0138">CF(0)</keyword>
<keyword id="KW-0375">Hydrogen ion transport</keyword>
<keyword id="KW-0406">Ion transport</keyword>
<keyword id="KW-0472">Membrane</keyword>
<keyword id="KW-0812">Transmembrane</keyword>
<keyword id="KW-1133">Transmembrane helix</keyword>
<keyword id="KW-0813">Transport</keyword>
<sequence>MNINLTLIGQAIAFAFFVAFCMKFVWPPLINAISERQRKIADGLNAAEKAKADLADAQAQVKQELDAAKAQAAQLIEQANRRAAQLIEEARTQAAAEGERIRQQAKEAVDQEINSAREELRQQVAALAVTGAEKILNQQVDAEAHNAMLSQLAAKL</sequence>
<feature type="chain" id="PRO_0000368292" description="ATP synthase subunit b">
    <location>
        <begin position="1"/>
        <end position="156"/>
    </location>
</feature>
<feature type="transmembrane region" description="Helical" evidence="1">
    <location>
        <begin position="5"/>
        <end position="25"/>
    </location>
</feature>
<comment type="function">
    <text evidence="1">F(1)F(0) ATP synthase produces ATP from ADP in the presence of a proton or sodium gradient. F-type ATPases consist of two structural domains, F(1) containing the extramembraneous catalytic core and F(0) containing the membrane proton channel, linked together by a central stalk and a peripheral stalk. During catalysis, ATP synthesis in the catalytic domain of F(1) is coupled via a rotary mechanism of the central stalk subunits to proton translocation.</text>
</comment>
<comment type="function">
    <text evidence="1">Component of the F(0) channel, it forms part of the peripheral stalk, linking F(1) to F(0).</text>
</comment>
<comment type="subunit">
    <text evidence="1">F-type ATPases have 2 components, F(1) - the catalytic core - and F(0) - the membrane proton channel. F(1) has five subunits: alpha(3), beta(3), gamma(1), delta(1), epsilon(1). F(0) has three main subunits: a(1), b(2) and c(10-14). The alpha and beta chains form an alternating ring which encloses part of the gamma chain. F(1) is attached to F(0) by a central stalk formed by the gamma and epsilon chains, while a peripheral stalk is formed by the delta and b chains.</text>
</comment>
<comment type="subcellular location">
    <subcellularLocation>
        <location evidence="1">Cell inner membrane</location>
        <topology evidence="1">Single-pass membrane protein</topology>
    </subcellularLocation>
</comment>
<comment type="similarity">
    <text evidence="1">Belongs to the ATPase B chain family.</text>
</comment>
<reference key="1">
    <citation type="journal article" date="2008" name="PLoS ONE">
        <title>Comparative analysis of Acinetobacters: three genomes for three lifestyles.</title>
        <authorList>
            <person name="Vallenet D."/>
            <person name="Nordmann P."/>
            <person name="Barbe V."/>
            <person name="Poirel L."/>
            <person name="Mangenot S."/>
            <person name="Bataille E."/>
            <person name="Dossat C."/>
            <person name="Gas S."/>
            <person name="Kreimeyer A."/>
            <person name="Lenoble P."/>
            <person name="Oztas S."/>
            <person name="Poulain J."/>
            <person name="Segurens B."/>
            <person name="Robert C."/>
            <person name="Abergel C."/>
            <person name="Claverie J.-M."/>
            <person name="Raoult D."/>
            <person name="Medigue C."/>
            <person name="Weissenbach J."/>
            <person name="Cruveiller S."/>
        </authorList>
    </citation>
    <scope>NUCLEOTIDE SEQUENCE [LARGE SCALE GENOMIC DNA]</scope>
    <source>
        <strain>AYE</strain>
    </source>
</reference>